<accession>A1W917</accession>
<reference key="1">
    <citation type="submission" date="2006-12" db="EMBL/GenBank/DDBJ databases">
        <title>Complete sequence of chromosome 1 of Acidovorax sp. JS42.</title>
        <authorList>
            <person name="Copeland A."/>
            <person name="Lucas S."/>
            <person name="Lapidus A."/>
            <person name="Barry K."/>
            <person name="Detter J.C."/>
            <person name="Glavina del Rio T."/>
            <person name="Dalin E."/>
            <person name="Tice H."/>
            <person name="Pitluck S."/>
            <person name="Chertkov O."/>
            <person name="Brettin T."/>
            <person name="Bruce D."/>
            <person name="Han C."/>
            <person name="Tapia R."/>
            <person name="Gilna P."/>
            <person name="Schmutz J."/>
            <person name="Larimer F."/>
            <person name="Land M."/>
            <person name="Hauser L."/>
            <person name="Kyrpides N."/>
            <person name="Kim E."/>
            <person name="Stahl D."/>
            <person name="Richardson P."/>
        </authorList>
    </citation>
    <scope>NUCLEOTIDE SEQUENCE [LARGE SCALE GENOMIC DNA]</scope>
    <source>
        <strain>JS42</strain>
    </source>
</reference>
<feature type="chain" id="PRO_0000323440" description="Elongation factor Ts">
    <location>
        <begin position="1"/>
        <end position="298"/>
    </location>
</feature>
<feature type="region of interest" description="Involved in Mg(2+) ion dislocation from EF-Tu" evidence="1">
    <location>
        <begin position="80"/>
        <end position="83"/>
    </location>
</feature>
<gene>
    <name evidence="1" type="primary">tsf</name>
    <name type="ordered locus">Ajs_2584</name>
</gene>
<dbReference type="EMBL" id="CP000539">
    <property type="protein sequence ID" value="ABM42742.1"/>
    <property type="molecule type" value="Genomic_DNA"/>
</dbReference>
<dbReference type="SMR" id="A1W917"/>
<dbReference type="STRING" id="232721.Ajs_2584"/>
<dbReference type="KEGG" id="ajs:Ajs_2584"/>
<dbReference type="eggNOG" id="COG0264">
    <property type="taxonomic scope" value="Bacteria"/>
</dbReference>
<dbReference type="HOGENOM" id="CLU_047155_0_2_4"/>
<dbReference type="Proteomes" id="UP000000645">
    <property type="component" value="Chromosome"/>
</dbReference>
<dbReference type="GO" id="GO:0005737">
    <property type="term" value="C:cytoplasm"/>
    <property type="evidence" value="ECO:0007669"/>
    <property type="project" value="UniProtKB-SubCell"/>
</dbReference>
<dbReference type="GO" id="GO:0003746">
    <property type="term" value="F:translation elongation factor activity"/>
    <property type="evidence" value="ECO:0007669"/>
    <property type="project" value="UniProtKB-UniRule"/>
</dbReference>
<dbReference type="CDD" id="cd14275">
    <property type="entry name" value="UBA_EF-Ts"/>
    <property type="match status" value="1"/>
</dbReference>
<dbReference type="FunFam" id="1.10.286.20:FF:000001">
    <property type="entry name" value="Elongation factor Ts"/>
    <property type="match status" value="1"/>
</dbReference>
<dbReference type="FunFam" id="1.10.8.10:FF:000001">
    <property type="entry name" value="Elongation factor Ts"/>
    <property type="match status" value="1"/>
</dbReference>
<dbReference type="Gene3D" id="1.10.286.20">
    <property type="match status" value="1"/>
</dbReference>
<dbReference type="Gene3D" id="1.10.8.10">
    <property type="entry name" value="DNA helicase RuvA subunit, C-terminal domain"/>
    <property type="match status" value="1"/>
</dbReference>
<dbReference type="Gene3D" id="3.30.479.20">
    <property type="entry name" value="Elongation factor Ts, dimerisation domain"/>
    <property type="match status" value="2"/>
</dbReference>
<dbReference type="HAMAP" id="MF_00050">
    <property type="entry name" value="EF_Ts"/>
    <property type="match status" value="1"/>
</dbReference>
<dbReference type="InterPro" id="IPR036402">
    <property type="entry name" value="EF-Ts_dimer_sf"/>
</dbReference>
<dbReference type="InterPro" id="IPR001816">
    <property type="entry name" value="Transl_elong_EFTs/EF1B"/>
</dbReference>
<dbReference type="InterPro" id="IPR014039">
    <property type="entry name" value="Transl_elong_EFTs/EF1B_dimer"/>
</dbReference>
<dbReference type="InterPro" id="IPR018101">
    <property type="entry name" value="Transl_elong_Ts_CS"/>
</dbReference>
<dbReference type="InterPro" id="IPR009060">
    <property type="entry name" value="UBA-like_sf"/>
</dbReference>
<dbReference type="NCBIfam" id="TIGR00116">
    <property type="entry name" value="tsf"/>
    <property type="match status" value="1"/>
</dbReference>
<dbReference type="PANTHER" id="PTHR11741">
    <property type="entry name" value="ELONGATION FACTOR TS"/>
    <property type="match status" value="1"/>
</dbReference>
<dbReference type="PANTHER" id="PTHR11741:SF0">
    <property type="entry name" value="ELONGATION FACTOR TS, MITOCHONDRIAL"/>
    <property type="match status" value="1"/>
</dbReference>
<dbReference type="Pfam" id="PF00889">
    <property type="entry name" value="EF_TS"/>
    <property type="match status" value="1"/>
</dbReference>
<dbReference type="SUPFAM" id="SSF54713">
    <property type="entry name" value="Elongation factor Ts (EF-Ts), dimerisation domain"/>
    <property type="match status" value="2"/>
</dbReference>
<dbReference type="SUPFAM" id="SSF46934">
    <property type="entry name" value="UBA-like"/>
    <property type="match status" value="1"/>
</dbReference>
<dbReference type="PROSITE" id="PS01127">
    <property type="entry name" value="EF_TS_2"/>
    <property type="match status" value="1"/>
</dbReference>
<comment type="function">
    <text evidence="1">Associates with the EF-Tu.GDP complex and induces the exchange of GDP to GTP. It remains bound to the aminoacyl-tRNA.EF-Tu.GTP complex up to the GTP hydrolysis stage on the ribosome.</text>
</comment>
<comment type="subcellular location">
    <subcellularLocation>
        <location evidence="1">Cytoplasm</location>
    </subcellularLocation>
</comment>
<comment type="similarity">
    <text evidence="1">Belongs to the EF-Ts family.</text>
</comment>
<keyword id="KW-0963">Cytoplasm</keyword>
<keyword id="KW-0251">Elongation factor</keyword>
<keyword id="KW-0648">Protein biosynthesis</keyword>
<evidence type="ECO:0000255" key="1">
    <source>
        <dbReference type="HAMAP-Rule" id="MF_00050"/>
    </source>
</evidence>
<proteinExistence type="inferred from homology"/>
<name>EFTS_ACISJ</name>
<organism>
    <name type="scientific">Acidovorax sp. (strain JS42)</name>
    <dbReference type="NCBI Taxonomy" id="232721"/>
    <lineage>
        <taxon>Bacteria</taxon>
        <taxon>Pseudomonadati</taxon>
        <taxon>Pseudomonadota</taxon>
        <taxon>Betaproteobacteria</taxon>
        <taxon>Burkholderiales</taxon>
        <taxon>Comamonadaceae</taxon>
        <taxon>Acidovorax</taxon>
    </lineage>
</organism>
<protein>
    <recommendedName>
        <fullName evidence="1">Elongation factor Ts</fullName>
        <shortName evidence="1">EF-Ts</shortName>
    </recommendedName>
</protein>
<sequence>MAAITASMVAELRGKTDAPMMECKKALTEADGDMAKAEELLRVKLGTKAGKAASRVTAEGVVASFINGNVGALIEVNSETDFVSKNDSFIAMANAAAKLVAEHNPADIEALGQLAYEQDGFGPTLEDVRKGLIGKIGENMSFRRFKRFSGSNLAAYLHGSRIGVVVEFDGDAVAAKDVAMHVAAMKPVALTSADVPADLIAKERAVAEGKAAESGKPADIAAKMVEGSVQKYLKEVSLADQVFVKAADGKQTVAQMLKAANTTVKGFTLYVVGEGIEKKVDDFAAEVAAQVAAAKSGA</sequence>